<evidence type="ECO:0000255" key="1">
    <source>
        <dbReference type="HAMAP-Rule" id="MF_02101"/>
    </source>
</evidence>
<comment type="function">
    <text evidence="1">Catalyzes the hydrolysis of 1,4-dihydroxy-2-naphthoyl-CoA (DHNA-CoA) to 1,4-dihydroxy-2-naphthoate (DHNA), a reaction involved in phylloquinone (vitamin K1) biosynthesis.</text>
</comment>
<comment type="catalytic activity">
    <reaction evidence="1">
        <text>1,4-dihydroxy-2-naphthoyl-CoA + H2O = 1,4-dihydroxy-2-naphthoate + CoA + H(+)</text>
        <dbReference type="Rhea" id="RHEA:26309"/>
        <dbReference type="ChEBI" id="CHEBI:11173"/>
        <dbReference type="ChEBI" id="CHEBI:15377"/>
        <dbReference type="ChEBI" id="CHEBI:15378"/>
        <dbReference type="ChEBI" id="CHEBI:57287"/>
        <dbReference type="ChEBI" id="CHEBI:58897"/>
        <dbReference type="EC" id="3.1.2.28"/>
    </reaction>
</comment>
<comment type="pathway">
    <text evidence="1">Cofactor biosynthesis; phylloquinone biosynthesis.</text>
</comment>
<comment type="pathway">
    <text evidence="1">Quinol/quinone metabolism; 1,4-dihydroxy-2-naphthoate biosynthesis; 1,4-dihydroxy-2-naphthoate from chorismate: step 7/7.</text>
</comment>
<comment type="similarity">
    <text evidence="1">Belongs to the 4-hydroxybenzoyl-CoA thioesterase family. DHNA-CoA hydrolase subfamily.</text>
</comment>
<organism>
    <name type="scientific">Synechococcus sp. (strain CC9605)</name>
    <dbReference type="NCBI Taxonomy" id="110662"/>
    <lineage>
        <taxon>Bacteria</taxon>
        <taxon>Bacillati</taxon>
        <taxon>Cyanobacteriota</taxon>
        <taxon>Cyanophyceae</taxon>
        <taxon>Synechococcales</taxon>
        <taxon>Synechococcaceae</taxon>
        <taxon>Synechococcus</taxon>
    </lineage>
</organism>
<protein>
    <recommendedName>
        <fullName evidence="1">1,4-dihydroxy-2-naphthoyl-CoA hydrolase</fullName>
        <shortName evidence="1">DHNA-CoA hydrolase</shortName>
        <ecNumber evidence="1">3.1.2.28</ecNumber>
    </recommendedName>
    <alternativeName>
        <fullName evidence="1">DHNA-CoA thioesterase</fullName>
    </alternativeName>
</protein>
<gene>
    <name type="ordered locus">Syncc9605_2435</name>
</gene>
<sequence>MTSAPWLELSRTVRFSDTDAAGVMHFQQLLGWCHQAWEESLERYGLTAGSVFPGGRREQPSVALPIVHCHADYRAPVQVGDKLLIRLKPERLDPSSFVVNSQVLLNEQLVASGCLRHVAIDANSRRRCALPDGVDRWLEASSLGRIQPL</sequence>
<reference key="1">
    <citation type="submission" date="2005-07" db="EMBL/GenBank/DDBJ databases">
        <title>Complete sequence of Synechococcus sp. CC9605.</title>
        <authorList>
            <consortium name="US DOE Joint Genome Institute"/>
            <person name="Copeland A."/>
            <person name="Lucas S."/>
            <person name="Lapidus A."/>
            <person name="Barry K."/>
            <person name="Detter J.C."/>
            <person name="Glavina T."/>
            <person name="Hammon N."/>
            <person name="Israni S."/>
            <person name="Pitluck S."/>
            <person name="Schmutz J."/>
            <person name="Martinez M."/>
            <person name="Larimer F."/>
            <person name="Land M."/>
            <person name="Kyrpides N."/>
            <person name="Ivanova N."/>
            <person name="Richardson P."/>
        </authorList>
    </citation>
    <scope>NUCLEOTIDE SEQUENCE [LARGE SCALE GENOMIC DNA]</scope>
    <source>
        <strain>CC9605</strain>
    </source>
</reference>
<proteinExistence type="inferred from homology"/>
<feature type="chain" id="PRO_0000377031" description="1,4-dihydroxy-2-naphthoyl-CoA hydrolase">
    <location>
        <begin position="1"/>
        <end position="149"/>
    </location>
</feature>
<feature type="active site" evidence="1">
    <location>
        <position position="19"/>
    </location>
</feature>
<name>DNCH_SYNSC</name>
<keyword id="KW-0378">Hydrolase</keyword>
<accession>Q3AGW5</accession>
<dbReference type="EC" id="3.1.2.28" evidence="1"/>
<dbReference type="EMBL" id="CP000110">
    <property type="protein sequence ID" value="ABB36167.1"/>
    <property type="molecule type" value="Genomic_DNA"/>
</dbReference>
<dbReference type="RefSeq" id="WP_011365363.1">
    <property type="nucleotide sequence ID" value="NC_007516.1"/>
</dbReference>
<dbReference type="SMR" id="Q3AGW5"/>
<dbReference type="STRING" id="110662.Syncc9605_2435"/>
<dbReference type="KEGG" id="syd:Syncc9605_2435"/>
<dbReference type="eggNOG" id="COG0824">
    <property type="taxonomic scope" value="Bacteria"/>
</dbReference>
<dbReference type="HOGENOM" id="CLU_101141_5_3_3"/>
<dbReference type="OrthoDB" id="9800856at2"/>
<dbReference type="UniPathway" id="UPA00995"/>
<dbReference type="UniPathway" id="UPA01057">
    <property type="reaction ID" value="UER01033"/>
</dbReference>
<dbReference type="GO" id="GO:0061522">
    <property type="term" value="F:1,4-dihydroxy-2-naphthoyl-CoA thioesterase activity"/>
    <property type="evidence" value="ECO:0007669"/>
    <property type="project" value="UniProtKB-EC"/>
</dbReference>
<dbReference type="GO" id="GO:0047617">
    <property type="term" value="F:fatty acyl-CoA hydrolase activity"/>
    <property type="evidence" value="ECO:0007669"/>
    <property type="project" value="TreeGrafter"/>
</dbReference>
<dbReference type="GO" id="GO:0042372">
    <property type="term" value="P:phylloquinone biosynthetic process"/>
    <property type="evidence" value="ECO:0007669"/>
    <property type="project" value="UniProtKB-UniRule"/>
</dbReference>
<dbReference type="CDD" id="cd00586">
    <property type="entry name" value="4HBT"/>
    <property type="match status" value="1"/>
</dbReference>
<dbReference type="Gene3D" id="3.10.129.10">
    <property type="entry name" value="Hotdog Thioesterase"/>
    <property type="match status" value="1"/>
</dbReference>
<dbReference type="HAMAP" id="MF_02101">
    <property type="entry name" value="DHNA_CoA_hydrolase"/>
    <property type="match status" value="1"/>
</dbReference>
<dbReference type="InterPro" id="IPR050563">
    <property type="entry name" value="4-hydroxybenzoyl-CoA_TE"/>
</dbReference>
<dbReference type="InterPro" id="IPR022829">
    <property type="entry name" value="DHNA_CoA_hydrolase"/>
</dbReference>
<dbReference type="InterPro" id="IPR029069">
    <property type="entry name" value="HotDog_dom_sf"/>
</dbReference>
<dbReference type="PANTHER" id="PTHR31793">
    <property type="entry name" value="4-HYDROXYBENZOYL-COA THIOESTERASE FAMILY MEMBER"/>
    <property type="match status" value="1"/>
</dbReference>
<dbReference type="PANTHER" id="PTHR31793:SF27">
    <property type="entry name" value="NOVEL THIOESTERASE SUPERFAMILY DOMAIN AND SAPOSIN A-TYPE DOMAIN CONTAINING PROTEIN (0610012H03RIK)"/>
    <property type="match status" value="1"/>
</dbReference>
<dbReference type="Pfam" id="PF13279">
    <property type="entry name" value="4HBT_2"/>
    <property type="match status" value="1"/>
</dbReference>
<dbReference type="SUPFAM" id="SSF54637">
    <property type="entry name" value="Thioesterase/thiol ester dehydrase-isomerase"/>
    <property type="match status" value="1"/>
</dbReference>